<organism>
    <name type="scientific">Danio rerio</name>
    <name type="common">Zebrafish</name>
    <name type="synonym">Brachydanio rerio</name>
    <dbReference type="NCBI Taxonomy" id="7955"/>
    <lineage>
        <taxon>Eukaryota</taxon>
        <taxon>Metazoa</taxon>
        <taxon>Chordata</taxon>
        <taxon>Craniata</taxon>
        <taxon>Vertebrata</taxon>
        <taxon>Euteleostomi</taxon>
        <taxon>Actinopterygii</taxon>
        <taxon>Neopterygii</taxon>
        <taxon>Teleostei</taxon>
        <taxon>Ostariophysi</taxon>
        <taxon>Cypriniformes</taxon>
        <taxon>Danionidae</taxon>
        <taxon>Danioninae</taxon>
        <taxon>Danio</taxon>
    </lineage>
</organism>
<protein>
    <recommendedName>
        <fullName evidence="4">Proton-activated chloride channel</fullName>
        <shortName evidence="4">PAC</shortName>
        <shortName evidence="4">fPAC</shortName>
    </recommendedName>
    <alternativeName>
        <fullName evidence="6">Transmembrane protein 206</fullName>
    </alternativeName>
</protein>
<keyword id="KW-1003">Cell membrane</keyword>
<keyword id="KW-0868">Chloride</keyword>
<keyword id="KW-0869">Chloride channel</keyword>
<keyword id="KW-0407">Ion channel</keyword>
<keyword id="KW-0406">Ion transport</keyword>
<keyword id="KW-0472">Membrane</keyword>
<keyword id="KW-1185">Reference proteome</keyword>
<keyword id="KW-0812">Transmembrane</keyword>
<keyword id="KW-1133">Transmembrane helix</keyword>
<keyword id="KW-0813">Transport</keyword>
<name>PACC1_DANRE</name>
<dbReference type="EMBL" id="BC055145">
    <property type="protein sequence ID" value="AAH55145.1"/>
    <property type="molecule type" value="mRNA"/>
</dbReference>
<dbReference type="SMR" id="Q7SY31"/>
<dbReference type="FunCoup" id="Q7SY31">
    <property type="interactions" value="1890"/>
</dbReference>
<dbReference type="STRING" id="7955.ENSDARP00000129197"/>
<dbReference type="TCDB" id="1.A.114.1.2">
    <property type="family name" value="the proton-activated chloride channel (pacc) family"/>
</dbReference>
<dbReference type="PaxDb" id="7955-ENSDARP00000129197"/>
<dbReference type="AGR" id="ZFIN:ZDB-GENE-040426-1173"/>
<dbReference type="ZFIN" id="ZDB-GENE-040426-1173">
    <property type="gene designation" value="pacc1"/>
</dbReference>
<dbReference type="eggNOG" id="ENOG502QS5H">
    <property type="taxonomic scope" value="Eukaryota"/>
</dbReference>
<dbReference type="InParanoid" id="Q7SY31"/>
<dbReference type="PhylomeDB" id="Q7SY31"/>
<dbReference type="PRO" id="PR:Q7SY31"/>
<dbReference type="Proteomes" id="UP000000437">
    <property type="component" value="Unplaced"/>
</dbReference>
<dbReference type="GO" id="GO:0034707">
    <property type="term" value="C:chloride channel complex"/>
    <property type="evidence" value="ECO:0007669"/>
    <property type="project" value="UniProtKB-KW"/>
</dbReference>
<dbReference type="GO" id="GO:0005886">
    <property type="term" value="C:plasma membrane"/>
    <property type="evidence" value="ECO:0000250"/>
    <property type="project" value="UniProtKB"/>
</dbReference>
<dbReference type="GO" id="GO:0061797">
    <property type="term" value="F:pH-gated chloride channel activity"/>
    <property type="evidence" value="ECO:0000314"/>
    <property type="project" value="UniProtKB"/>
</dbReference>
<dbReference type="GO" id="GO:0006821">
    <property type="term" value="P:chloride transport"/>
    <property type="evidence" value="ECO:0000314"/>
    <property type="project" value="UniProtKB"/>
</dbReference>
<dbReference type="InterPro" id="IPR029366">
    <property type="entry name" value="TMEM206"/>
</dbReference>
<dbReference type="PANTHER" id="PTHR16087:SF0">
    <property type="entry name" value="PROTON-ACTIVATED CHLORIDE CHANNEL"/>
    <property type="match status" value="1"/>
</dbReference>
<dbReference type="PANTHER" id="PTHR16087">
    <property type="entry name" value="TRANSMEMBRANE PROTEIN 206"/>
    <property type="match status" value="1"/>
</dbReference>
<dbReference type="Pfam" id="PF15122">
    <property type="entry name" value="TMEM206"/>
    <property type="match status" value="1"/>
</dbReference>
<accession>Q7SY31</accession>
<comment type="function">
    <text evidence="3">Chloride channel gated by pH that facilitates the entry of chloride ions into cells upon exposure to extracellular acidic pH (PubMed:31023925). Displays channel activity with distinct kinetic properties compared to the human ortholog channel (PubMed:31023925).</text>
</comment>
<comment type="catalytic activity">
    <reaction evidence="3">
        <text>chloride(in) = chloride(out)</text>
        <dbReference type="Rhea" id="RHEA:29823"/>
        <dbReference type="ChEBI" id="CHEBI:17996"/>
    </reaction>
</comment>
<comment type="subcellular location">
    <subcellularLocation>
        <location evidence="1">Cell membrane</location>
        <topology evidence="1">Multi-pass membrane protein</topology>
    </subcellularLocation>
</comment>
<comment type="similarity">
    <text evidence="6">Belongs to the proton-activated chloride channel family.</text>
</comment>
<sequence length="298" mass="34687">MPIGFNKACLKNVFTVILVLIYLALTAVAVFLAYQTISDFMDKLNHPVMSVSYKEVEEFAAPGIVLFPGKAHLLSCMHHYHDNIPPLVALENLAKRECMKEEVIYHGPYSNQTEKRALVFRGPTDVRNRELIFLQLSRNETEEDFSAISYMIFAKFSDMLESSDKAAFMMDCERNYSMWTFSGGFRTWVKMSLVRTSGRRNESVEFRQESSVVKYIDKRPPLEQTNELFFIVFQWRDPFIQQVKDIVTANPWNTIAILCGVFMALFKAADFAKLSIKWMIRIRKRHIRAKMREMNQIS</sequence>
<feature type="chain" id="PRO_0000279475" description="Proton-activated chloride channel">
    <location>
        <begin position="1"/>
        <end position="298"/>
    </location>
</feature>
<feature type="topological domain" description="Cytoplasmic" evidence="1">
    <location>
        <begin position="1"/>
        <end position="12"/>
    </location>
</feature>
<feature type="transmembrane region" description="Helical" evidence="2">
    <location>
        <begin position="13"/>
        <end position="33"/>
    </location>
</feature>
<feature type="topological domain" description="Extracellular" evidence="2">
    <location>
        <begin position="34"/>
        <end position="245"/>
    </location>
</feature>
<feature type="transmembrane region" description="Helical" evidence="2">
    <location>
        <begin position="246"/>
        <end position="266"/>
    </location>
</feature>
<feature type="topological domain" description="Cytoplasmic" evidence="1">
    <location>
        <begin position="267"/>
        <end position="298"/>
    </location>
</feature>
<gene>
    <name evidence="1" type="primary">pacc1</name>
    <name evidence="1" type="synonym">tmem206</name>
    <name evidence="5" type="ORF">zgc:63579</name>
</gene>
<proteinExistence type="evidence at transcript level"/>
<evidence type="ECO:0000250" key="1">
    <source>
        <dbReference type="UniProtKB" id="Q9H813"/>
    </source>
</evidence>
<evidence type="ECO:0000255" key="2"/>
<evidence type="ECO:0000269" key="3">
    <source>
    </source>
</evidence>
<evidence type="ECO:0000303" key="4">
    <source>
    </source>
</evidence>
<evidence type="ECO:0000303" key="5">
    <source ref="1"/>
</evidence>
<evidence type="ECO:0000305" key="6"/>
<reference key="1">
    <citation type="submission" date="2003-07" db="EMBL/GenBank/DDBJ databases">
        <authorList>
            <consortium name="NIH - Zebrafish Gene Collection (ZGC) project"/>
        </authorList>
    </citation>
    <scope>NUCLEOTIDE SEQUENCE [LARGE SCALE MRNA]</scope>
    <source>
        <strain>SJD</strain>
    </source>
</reference>
<reference key="2">
    <citation type="journal article" date="2019" name="Science">
        <title>PAC, an evolutionarily conserved membrane protein, is a proton-activated chloride channel.</title>
        <authorList>
            <person name="Yang J."/>
            <person name="Chen J."/>
            <person name="Del Carmen Vitery M."/>
            <person name="Osei-Owusu J."/>
            <person name="Chu J."/>
            <person name="Yu H."/>
            <person name="Sun S."/>
            <person name="Qiu Z."/>
        </authorList>
    </citation>
    <scope>FUNCTION</scope>
    <scope>TRANSPORTER ACTIVITY</scope>
</reference>